<accession>B5FBC8</accession>
<proteinExistence type="inferred from homology"/>
<gene>
    <name evidence="1" type="primary">ureA</name>
    <name type="ordered locus">VFMJ11_0693</name>
</gene>
<comment type="catalytic activity">
    <reaction evidence="1">
        <text>urea + 2 H2O + H(+) = hydrogencarbonate + 2 NH4(+)</text>
        <dbReference type="Rhea" id="RHEA:20557"/>
        <dbReference type="ChEBI" id="CHEBI:15377"/>
        <dbReference type="ChEBI" id="CHEBI:15378"/>
        <dbReference type="ChEBI" id="CHEBI:16199"/>
        <dbReference type="ChEBI" id="CHEBI:17544"/>
        <dbReference type="ChEBI" id="CHEBI:28938"/>
        <dbReference type="EC" id="3.5.1.5"/>
    </reaction>
</comment>
<comment type="pathway">
    <text evidence="1">Nitrogen metabolism; urea degradation; CO(2) and NH(3) from urea (urease route): step 1/1.</text>
</comment>
<comment type="subunit">
    <text evidence="1">Heterotrimer of UreA (gamma), UreB (beta) and UreC (alpha) subunits. Three heterotrimers associate to form the active enzyme.</text>
</comment>
<comment type="subcellular location">
    <subcellularLocation>
        <location evidence="1">Cytoplasm</location>
    </subcellularLocation>
</comment>
<comment type="similarity">
    <text evidence="1">Belongs to the urease gamma subunit family.</text>
</comment>
<name>URE3_ALIFM</name>
<organism>
    <name type="scientific">Aliivibrio fischeri (strain MJ11)</name>
    <name type="common">Vibrio fischeri</name>
    <dbReference type="NCBI Taxonomy" id="388396"/>
    <lineage>
        <taxon>Bacteria</taxon>
        <taxon>Pseudomonadati</taxon>
        <taxon>Pseudomonadota</taxon>
        <taxon>Gammaproteobacteria</taxon>
        <taxon>Vibrionales</taxon>
        <taxon>Vibrionaceae</taxon>
        <taxon>Aliivibrio</taxon>
    </lineage>
</organism>
<feature type="chain" id="PRO_1000199889" description="Urease subunit gamma">
    <location>
        <begin position="1"/>
        <end position="100"/>
    </location>
</feature>
<reference key="1">
    <citation type="submission" date="2008-08" db="EMBL/GenBank/DDBJ databases">
        <title>Complete sequence of Vibrio fischeri strain MJ11.</title>
        <authorList>
            <person name="Mandel M.J."/>
            <person name="Stabb E.V."/>
            <person name="Ruby E.G."/>
            <person name="Ferriera S."/>
            <person name="Johnson J."/>
            <person name="Kravitz S."/>
            <person name="Beeson K."/>
            <person name="Sutton G."/>
            <person name="Rogers Y.-H."/>
            <person name="Friedman R."/>
            <person name="Frazier M."/>
            <person name="Venter J.C."/>
        </authorList>
    </citation>
    <scope>NUCLEOTIDE SEQUENCE [LARGE SCALE GENOMIC DNA]</scope>
    <source>
        <strain>MJ11</strain>
    </source>
</reference>
<sequence>MELTPREKDKLLLASAGMIAERRKARGLKLNYPEAVALICFEIMEGARDGRTVADLMNYGRTILTADDVMEGVPEMIPDVQVECTFPDGTKLVSIHEPIV</sequence>
<keyword id="KW-0963">Cytoplasm</keyword>
<keyword id="KW-0378">Hydrolase</keyword>
<evidence type="ECO:0000255" key="1">
    <source>
        <dbReference type="HAMAP-Rule" id="MF_00739"/>
    </source>
</evidence>
<protein>
    <recommendedName>
        <fullName evidence="1">Urease subunit gamma</fullName>
        <ecNumber evidence="1">3.5.1.5</ecNumber>
    </recommendedName>
    <alternativeName>
        <fullName evidence="1">Urea amidohydrolase subunit gamma</fullName>
    </alternativeName>
</protein>
<dbReference type="EC" id="3.5.1.5" evidence="1"/>
<dbReference type="EMBL" id="CP001139">
    <property type="protein sequence ID" value="ACH65203.1"/>
    <property type="molecule type" value="Genomic_DNA"/>
</dbReference>
<dbReference type="RefSeq" id="WP_005418034.1">
    <property type="nucleotide sequence ID" value="NC_011184.1"/>
</dbReference>
<dbReference type="SMR" id="B5FBC8"/>
<dbReference type="GeneID" id="54163330"/>
<dbReference type="KEGG" id="vfm:VFMJ11_0693"/>
<dbReference type="HOGENOM" id="CLU_145825_1_0_6"/>
<dbReference type="UniPathway" id="UPA00258">
    <property type="reaction ID" value="UER00370"/>
</dbReference>
<dbReference type="Proteomes" id="UP000001857">
    <property type="component" value="Chromosome I"/>
</dbReference>
<dbReference type="GO" id="GO:0005737">
    <property type="term" value="C:cytoplasm"/>
    <property type="evidence" value="ECO:0007669"/>
    <property type="project" value="UniProtKB-SubCell"/>
</dbReference>
<dbReference type="GO" id="GO:0016151">
    <property type="term" value="F:nickel cation binding"/>
    <property type="evidence" value="ECO:0007669"/>
    <property type="project" value="InterPro"/>
</dbReference>
<dbReference type="GO" id="GO:0009039">
    <property type="term" value="F:urease activity"/>
    <property type="evidence" value="ECO:0007669"/>
    <property type="project" value="UniProtKB-UniRule"/>
</dbReference>
<dbReference type="GO" id="GO:0043419">
    <property type="term" value="P:urea catabolic process"/>
    <property type="evidence" value="ECO:0007669"/>
    <property type="project" value="UniProtKB-UniRule"/>
</dbReference>
<dbReference type="CDD" id="cd00390">
    <property type="entry name" value="Urease_gamma"/>
    <property type="match status" value="1"/>
</dbReference>
<dbReference type="Gene3D" id="3.30.280.10">
    <property type="entry name" value="Urease, gamma-like subunit"/>
    <property type="match status" value="1"/>
</dbReference>
<dbReference type="HAMAP" id="MF_00739">
    <property type="entry name" value="Urease_gamma"/>
    <property type="match status" value="1"/>
</dbReference>
<dbReference type="InterPro" id="IPR012010">
    <property type="entry name" value="Urease_gamma"/>
</dbReference>
<dbReference type="InterPro" id="IPR002026">
    <property type="entry name" value="Urease_gamma/gamma-beta_su"/>
</dbReference>
<dbReference type="InterPro" id="IPR036463">
    <property type="entry name" value="Urease_gamma_sf"/>
</dbReference>
<dbReference type="InterPro" id="IPR050069">
    <property type="entry name" value="Urease_subunit"/>
</dbReference>
<dbReference type="NCBIfam" id="NF009712">
    <property type="entry name" value="PRK13241.1"/>
    <property type="match status" value="1"/>
</dbReference>
<dbReference type="NCBIfam" id="TIGR00193">
    <property type="entry name" value="urease_gam"/>
    <property type="match status" value="1"/>
</dbReference>
<dbReference type="PANTHER" id="PTHR33569">
    <property type="entry name" value="UREASE"/>
    <property type="match status" value="1"/>
</dbReference>
<dbReference type="PANTHER" id="PTHR33569:SF1">
    <property type="entry name" value="UREASE"/>
    <property type="match status" value="1"/>
</dbReference>
<dbReference type="Pfam" id="PF00547">
    <property type="entry name" value="Urease_gamma"/>
    <property type="match status" value="1"/>
</dbReference>
<dbReference type="PIRSF" id="PIRSF001223">
    <property type="entry name" value="Urease_gamma"/>
    <property type="match status" value="1"/>
</dbReference>
<dbReference type="SUPFAM" id="SSF54111">
    <property type="entry name" value="Urease, gamma-subunit"/>
    <property type="match status" value="1"/>
</dbReference>